<sequence>MNQVEMTEFPVGKPQEALYGVASTPDGALWFTLAKGNAIGRLSPDGAVSRFPLPHTDGQPTTITCGPDGRPWFTLSSANAIGRLAPDGALRMFELPRPASRPFGIAGGHDGCLWFAEMAGDRIGRITIDGDIEEYDLPVKGGYPSCMAAGRDGLMWFTLNQAGAVGSISATAAPRIFPLGAADAAPVGIASDAQGALWIAQAGNGAIVRFDAGGRITEFPLHSRAARPHAIAADAAGNLWFTEWGANRIGRISEAGDLAGYELAAPGSEPHGIAIDPHGCVWAALETGRLVRLQASPRD</sequence>
<proteinExistence type="inferred from homology"/>
<name>VGB_BORPA</name>
<protein>
    <recommendedName>
        <fullName evidence="1">Virginiamycin B lyase</fullName>
        <ecNumber evidence="1">4.2.99.-</ecNumber>
    </recommendedName>
    <alternativeName>
        <fullName evidence="1">Streptogramin B lyase</fullName>
    </alternativeName>
</protein>
<organism>
    <name type="scientific">Bordetella parapertussis (strain 12822 / ATCC BAA-587 / NCTC 13253)</name>
    <dbReference type="NCBI Taxonomy" id="257311"/>
    <lineage>
        <taxon>Bacteria</taxon>
        <taxon>Pseudomonadati</taxon>
        <taxon>Pseudomonadota</taxon>
        <taxon>Betaproteobacteria</taxon>
        <taxon>Burkholderiales</taxon>
        <taxon>Alcaligenaceae</taxon>
        <taxon>Bordetella</taxon>
    </lineage>
</organism>
<reference key="1">
    <citation type="journal article" date="2003" name="Nat. Genet.">
        <title>Comparative analysis of the genome sequences of Bordetella pertussis, Bordetella parapertussis and Bordetella bronchiseptica.</title>
        <authorList>
            <person name="Parkhill J."/>
            <person name="Sebaihia M."/>
            <person name="Preston A."/>
            <person name="Murphy L.D."/>
            <person name="Thomson N.R."/>
            <person name="Harris D.E."/>
            <person name="Holden M.T.G."/>
            <person name="Churcher C.M."/>
            <person name="Bentley S.D."/>
            <person name="Mungall K.L."/>
            <person name="Cerdeno-Tarraga A.-M."/>
            <person name="Temple L."/>
            <person name="James K.D."/>
            <person name="Harris B."/>
            <person name="Quail M.A."/>
            <person name="Achtman M."/>
            <person name="Atkin R."/>
            <person name="Baker S."/>
            <person name="Basham D."/>
            <person name="Bason N."/>
            <person name="Cherevach I."/>
            <person name="Chillingworth T."/>
            <person name="Collins M."/>
            <person name="Cronin A."/>
            <person name="Davis P."/>
            <person name="Doggett J."/>
            <person name="Feltwell T."/>
            <person name="Goble A."/>
            <person name="Hamlin N."/>
            <person name="Hauser H."/>
            <person name="Holroyd S."/>
            <person name="Jagels K."/>
            <person name="Leather S."/>
            <person name="Moule S."/>
            <person name="Norberczak H."/>
            <person name="O'Neil S."/>
            <person name="Ormond D."/>
            <person name="Price C."/>
            <person name="Rabbinowitsch E."/>
            <person name="Rutter S."/>
            <person name="Sanders M."/>
            <person name="Saunders D."/>
            <person name="Seeger K."/>
            <person name="Sharp S."/>
            <person name="Simmonds M."/>
            <person name="Skelton J."/>
            <person name="Squares R."/>
            <person name="Squares S."/>
            <person name="Stevens K."/>
            <person name="Unwin L."/>
            <person name="Whitehead S."/>
            <person name="Barrell B.G."/>
            <person name="Maskell D.J."/>
        </authorList>
    </citation>
    <scope>NUCLEOTIDE SEQUENCE [LARGE SCALE GENOMIC DNA]</scope>
    <source>
        <strain>12822 / ATCC BAA-587 / NCTC 13253</strain>
    </source>
</reference>
<dbReference type="EC" id="4.2.99.-" evidence="1"/>
<dbReference type="EMBL" id="BX640424">
    <property type="protein sequence ID" value="CAE36005.1"/>
    <property type="molecule type" value="Genomic_DNA"/>
</dbReference>
<dbReference type="RefSeq" id="WP_010927464.1">
    <property type="nucleotide sequence ID" value="NC_002928.3"/>
</dbReference>
<dbReference type="SMR" id="Q7WCA6"/>
<dbReference type="GeneID" id="93206655"/>
<dbReference type="KEGG" id="bpa:BPP0421"/>
<dbReference type="HOGENOM" id="CLU_054751_1_0_4"/>
<dbReference type="Proteomes" id="UP000001421">
    <property type="component" value="Chromosome"/>
</dbReference>
<dbReference type="GO" id="GO:0030288">
    <property type="term" value="C:outer membrane-bounded periplasmic space"/>
    <property type="evidence" value="ECO:0007669"/>
    <property type="project" value="TreeGrafter"/>
</dbReference>
<dbReference type="GO" id="GO:0016835">
    <property type="term" value="F:carbon-oxygen lyase activity"/>
    <property type="evidence" value="ECO:0007669"/>
    <property type="project" value="UniProtKB-UniRule"/>
</dbReference>
<dbReference type="GO" id="GO:0000287">
    <property type="term" value="F:magnesium ion binding"/>
    <property type="evidence" value="ECO:0007669"/>
    <property type="project" value="InterPro"/>
</dbReference>
<dbReference type="GO" id="GO:0017001">
    <property type="term" value="P:antibiotic catabolic process"/>
    <property type="evidence" value="ECO:0007669"/>
    <property type="project" value="UniProtKB-UniRule"/>
</dbReference>
<dbReference type="GO" id="GO:0046677">
    <property type="term" value="P:response to antibiotic"/>
    <property type="evidence" value="ECO:0007669"/>
    <property type="project" value="UniProtKB-KW"/>
</dbReference>
<dbReference type="Gene3D" id="2.130.10.10">
    <property type="entry name" value="YVTN repeat-like/Quinoprotein amine dehydrogenase"/>
    <property type="match status" value="1"/>
</dbReference>
<dbReference type="HAMAP" id="MF_01282">
    <property type="entry name" value="VirginiamycinB_lyase"/>
    <property type="match status" value="1"/>
</dbReference>
<dbReference type="InterPro" id="IPR011217">
    <property type="entry name" value="Streptogrm_lyase"/>
</dbReference>
<dbReference type="InterPro" id="IPR051344">
    <property type="entry name" value="Vgb"/>
</dbReference>
<dbReference type="InterPro" id="IPR015943">
    <property type="entry name" value="WD40/YVTN_repeat-like_dom_sf"/>
</dbReference>
<dbReference type="PANTHER" id="PTHR40274">
    <property type="entry name" value="VIRGINIAMYCIN B LYASE"/>
    <property type="match status" value="1"/>
</dbReference>
<dbReference type="PANTHER" id="PTHR40274:SF3">
    <property type="entry name" value="VIRGINIAMYCIN B LYASE"/>
    <property type="match status" value="1"/>
</dbReference>
<dbReference type="Pfam" id="PF24684">
    <property type="entry name" value="Vgb_lyase"/>
    <property type="match status" value="1"/>
</dbReference>
<dbReference type="PIRSF" id="PIRSF026412">
    <property type="entry name" value="Streptogrm_lyase"/>
    <property type="match status" value="1"/>
</dbReference>
<dbReference type="SUPFAM" id="SSF63829">
    <property type="entry name" value="Calcium-dependent phosphotriesterase"/>
    <property type="match status" value="1"/>
</dbReference>
<accession>Q7WCA6</accession>
<comment type="function">
    <text evidence="1">Inactivates the type B streptogramin antibiotics by linearizing the lactone ring at the ester linkage, generating a free phenylglycine carboxylate and converting the threonyl moiety into 2-amino-butenoic acid.</text>
</comment>
<comment type="cofactor">
    <cofactor evidence="1">
        <name>Mg(2+)</name>
        <dbReference type="ChEBI" id="CHEBI:18420"/>
    </cofactor>
</comment>
<comment type="subunit">
    <text evidence="1">Monomer.</text>
</comment>
<comment type="similarity">
    <text evidence="1">Belongs to the Vgb family.</text>
</comment>
<feature type="chain" id="PRO_0000313769" description="Virginiamycin B lyase">
    <location>
        <begin position="1"/>
        <end position="299"/>
    </location>
</feature>
<feature type="active site" description="Proton acceptor" evidence="1">
    <location>
        <position position="271"/>
    </location>
</feature>
<feature type="binding site" evidence="1">
    <location>
        <position position="229"/>
    </location>
    <ligand>
        <name>substrate</name>
    </ligand>
</feature>
<feature type="binding site" evidence="1">
    <location>
        <position position="269"/>
    </location>
    <ligand>
        <name>Mg(2+)</name>
        <dbReference type="ChEBI" id="CHEBI:18420"/>
    </ligand>
</feature>
<feature type="binding site" evidence="1">
    <location>
        <position position="286"/>
    </location>
    <ligand>
        <name>Mg(2+)</name>
        <dbReference type="ChEBI" id="CHEBI:18420"/>
    </ligand>
</feature>
<gene>
    <name evidence="1" type="primary">vgb</name>
    <name type="ordered locus">BPP0421</name>
</gene>
<keyword id="KW-0046">Antibiotic resistance</keyword>
<keyword id="KW-0456">Lyase</keyword>
<keyword id="KW-0460">Magnesium</keyword>
<keyword id="KW-0479">Metal-binding</keyword>
<evidence type="ECO:0000255" key="1">
    <source>
        <dbReference type="HAMAP-Rule" id="MF_01282"/>
    </source>
</evidence>